<name>MTGA_PARXL</name>
<feature type="chain" id="PRO_0000257664" description="Biosynthetic peptidoglycan transglycosylase">
    <location>
        <begin position="1"/>
        <end position="240"/>
    </location>
</feature>
<feature type="transmembrane region" description="Helical" evidence="1">
    <location>
        <begin position="15"/>
        <end position="35"/>
    </location>
</feature>
<organism>
    <name type="scientific">Paraburkholderia xenovorans (strain LB400)</name>
    <dbReference type="NCBI Taxonomy" id="266265"/>
    <lineage>
        <taxon>Bacteria</taxon>
        <taxon>Pseudomonadati</taxon>
        <taxon>Pseudomonadota</taxon>
        <taxon>Betaproteobacteria</taxon>
        <taxon>Burkholderiales</taxon>
        <taxon>Burkholderiaceae</taxon>
        <taxon>Paraburkholderia</taxon>
    </lineage>
</organism>
<protein>
    <recommendedName>
        <fullName evidence="1">Biosynthetic peptidoglycan transglycosylase</fullName>
        <ecNumber evidence="1">2.4.99.28</ecNumber>
    </recommendedName>
    <alternativeName>
        <fullName evidence="1">Glycan polymerase</fullName>
    </alternativeName>
    <alternativeName>
        <fullName evidence="1">Peptidoglycan glycosyltransferase MtgA</fullName>
        <shortName evidence="1">PGT</shortName>
    </alternativeName>
</protein>
<keyword id="KW-0997">Cell inner membrane</keyword>
<keyword id="KW-1003">Cell membrane</keyword>
<keyword id="KW-0133">Cell shape</keyword>
<keyword id="KW-0961">Cell wall biogenesis/degradation</keyword>
<keyword id="KW-0328">Glycosyltransferase</keyword>
<keyword id="KW-0472">Membrane</keyword>
<keyword id="KW-0573">Peptidoglycan synthesis</keyword>
<keyword id="KW-1185">Reference proteome</keyword>
<keyword id="KW-0808">Transferase</keyword>
<keyword id="KW-0812">Transmembrane</keyword>
<keyword id="KW-1133">Transmembrane helix</keyword>
<proteinExistence type="inferred from homology"/>
<reference key="1">
    <citation type="journal article" date="2006" name="Proc. Natl. Acad. Sci. U.S.A.">
        <title>Burkholderia xenovorans LB400 harbors a multi-replicon, 9.73-Mbp genome shaped for versatility.</title>
        <authorList>
            <person name="Chain P.S.G."/>
            <person name="Denef V.J."/>
            <person name="Konstantinidis K.T."/>
            <person name="Vergez L.M."/>
            <person name="Agullo L."/>
            <person name="Reyes V.L."/>
            <person name="Hauser L."/>
            <person name="Cordova M."/>
            <person name="Gomez L."/>
            <person name="Gonzalez M."/>
            <person name="Land M."/>
            <person name="Lao V."/>
            <person name="Larimer F."/>
            <person name="LiPuma J.J."/>
            <person name="Mahenthiralingam E."/>
            <person name="Malfatti S.A."/>
            <person name="Marx C.J."/>
            <person name="Parnell J.J."/>
            <person name="Ramette A."/>
            <person name="Richardson P."/>
            <person name="Seeger M."/>
            <person name="Smith D."/>
            <person name="Spilker T."/>
            <person name="Sul W.J."/>
            <person name="Tsoi T.V."/>
            <person name="Ulrich L.E."/>
            <person name="Zhulin I.B."/>
            <person name="Tiedje J.M."/>
        </authorList>
    </citation>
    <scope>NUCLEOTIDE SEQUENCE [LARGE SCALE GENOMIC DNA]</scope>
    <source>
        <strain>LB400</strain>
    </source>
</reference>
<gene>
    <name evidence="1" type="primary">mtgA</name>
    <name type="ordered locus">Bxeno_A3855</name>
    <name type="ORF">Bxe_A0540</name>
</gene>
<evidence type="ECO:0000255" key="1">
    <source>
        <dbReference type="HAMAP-Rule" id="MF_00766"/>
    </source>
</evidence>
<comment type="function">
    <text evidence="1">Peptidoglycan polymerase that catalyzes glycan chain elongation from lipid-linked precursors.</text>
</comment>
<comment type="catalytic activity">
    <reaction evidence="1">
        <text>[GlcNAc-(1-&gt;4)-Mur2Ac(oyl-L-Ala-gamma-D-Glu-L-Lys-D-Ala-D-Ala)](n)-di-trans,octa-cis-undecaprenyl diphosphate + beta-D-GlcNAc-(1-&gt;4)-Mur2Ac(oyl-L-Ala-gamma-D-Glu-L-Lys-D-Ala-D-Ala)-di-trans,octa-cis-undecaprenyl diphosphate = [GlcNAc-(1-&gt;4)-Mur2Ac(oyl-L-Ala-gamma-D-Glu-L-Lys-D-Ala-D-Ala)](n+1)-di-trans,octa-cis-undecaprenyl diphosphate + di-trans,octa-cis-undecaprenyl diphosphate + H(+)</text>
        <dbReference type="Rhea" id="RHEA:23708"/>
        <dbReference type="Rhea" id="RHEA-COMP:9602"/>
        <dbReference type="Rhea" id="RHEA-COMP:9603"/>
        <dbReference type="ChEBI" id="CHEBI:15378"/>
        <dbReference type="ChEBI" id="CHEBI:58405"/>
        <dbReference type="ChEBI" id="CHEBI:60033"/>
        <dbReference type="ChEBI" id="CHEBI:78435"/>
        <dbReference type="EC" id="2.4.99.28"/>
    </reaction>
</comment>
<comment type="pathway">
    <text evidence="1">Cell wall biogenesis; peptidoglycan biosynthesis.</text>
</comment>
<comment type="subcellular location">
    <subcellularLocation>
        <location evidence="1">Cell inner membrane</location>
        <topology evidence="1">Single-pass membrane protein</topology>
    </subcellularLocation>
</comment>
<comment type="similarity">
    <text evidence="1">Belongs to the glycosyltransferase 51 family.</text>
</comment>
<sequence length="240" mass="27552">MTATRRVSRPGPVRWMFYLGAVVAIAWLATQAFYFAQIAVWNYVNPRTTSFMRSDAWRLSQDRPDLSVQHTWVPYDQISRNLKRAIIASEDANFVNNNGYETDAILQAWERNKAKGKIVRGGSTITQQLARNLFLSREKSYIRKGQELIITWMLETLMDKERIFEIYLNSVEWGNGVYGAEAAAHYYFKTSASKLTAAQSARLAVMLPQPKYFDEHRGSPYLAQRSRVIARRMGAAELPD</sequence>
<dbReference type="EC" id="2.4.99.28" evidence="1"/>
<dbReference type="EMBL" id="CP000270">
    <property type="protein sequence ID" value="ABE32393.1"/>
    <property type="molecule type" value="Genomic_DNA"/>
</dbReference>
<dbReference type="RefSeq" id="WP_011489870.1">
    <property type="nucleotide sequence ID" value="NC_007951.1"/>
</dbReference>
<dbReference type="SMR" id="Q13U46"/>
<dbReference type="STRING" id="266265.Bxe_A0540"/>
<dbReference type="CAZy" id="GT51">
    <property type="family name" value="Glycosyltransferase Family 51"/>
</dbReference>
<dbReference type="KEGG" id="bxb:DR64_2715"/>
<dbReference type="KEGG" id="bxe:Bxe_A0540"/>
<dbReference type="PATRIC" id="fig|266265.5.peg.4074"/>
<dbReference type="eggNOG" id="COG0744">
    <property type="taxonomic scope" value="Bacteria"/>
</dbReference>
<dbReference type="OrthoDB" id="9766909at2"/>
<dbReference type="UniPathway" id="UPA00219"/>
<dbReference type="Proteomes" id="UP000001817">
    <property type="component" value="Chromosome 1"/>
</dbReference>
<dbReference type="GO" id="GO:0009274">
    <property type="term" value="C:peptidoglycan-based cell wall"/>
    <property type="evidence" value="ECO:0007669"/>
    <property type="project" value="InterPro"/>
</dbReference>
<dbReference type="GO" id="GO:0005886">
    <property type="term" value="C:plasma membrane"/>
    <property type="evidence" value="ECO:0007669"/>
    <property type="project" value="UniProtKB-SubCell"/>
</dbReference>
<dbReference type="GO" id="GO:0016763">
    <property type="term" value="F:pentosyltransferase activity"/>
    <property type="evidence" value="ECO:0007669"/>
    <property type="project" value="InterPro"/>
</dbReference>
<dbReference type="GO" id="GO:0008955">
    <property type="term" value="F:peptidoglycan glycosyltransferase activity"/>
    <property type="evidence" value="ECO:0007669"/>
    <property type="project" value="UniProtKB-UniRule"/>
</dbReference>
<dbReference type="GO" id="GO:0071555">
    <property type="term" value="P:cell wall organization"/>
    <property type="evidence" value="ECO:0007669"/>
    <property type="project" value="UniProtKB-KW"/>
</dbReference>
<dbReference type="GO" id="GO:0009252">
    <property type="term" value="P:peptidoglycan biosynthetic process"/>
    <property type="evidence" value="ECO:0007669"/>
    <property type="project" value="UniProtKB-UniRule"/>
</dbReference>
<dbReference type="GO" id="GO:0008360">
    <property type="term" value="P:regulation of cell shape"/>
    <property type="evidence" value="ECO:0007669"/>
    <property type="project" value="UniProtKB-KW"/>
</dbReference>
<dbReference type="Gene3D" id="1.10.3810.10">
    <property type="entry name" value="Biosynthetic peptidoglycan transglycosylase-like"/>
    <property type="match status" value="1"/>
</dbReference>
<dbReference type="HAMAP" id="MF_00766">
    <property type="entry name" value="PGT_MtgA"/>
    <property type="match status" value="1"/>
</dbReference>
<dbReference type="InterPro" id="IPR001264">
    <property type="entry name" value="Glyco_trans_51"/>
</dbReference>
<dbReference type="InterPro" id="IPR023346">
    <property type="entry name" value="Lysozyme-like_dom_sf"/>
</dbReference>
<dbReference type="InterPro" id="IPR036950">
    <property type="entry name" value="PBP_transglycosylase"/>
</dbReference>
<dbReference type="InterPro" id="IPR011812">
    <property type="entry name" value="Pep_trsgly"/>
</dbReference>
<dbReference type="NCBIfam" id="TIGR02070">
    <property type="entry name" value="mono_pep_trsgly"/>
    <property type="match status" value="1"/>
</dbReference>
<dbReference type="PANTHER" id="PTHR30400:SF0">
    <property type="entry name" value="BIOSYNTHETIC PEPTIDOGLYCAN TRANSGLYCOSYLASE"/>
    <property type="match status" value="1"/>
</dbReference>
<dbReference type="PANTHER" id="PTHR30400">
    <property type="entry name" value="MONOFUNCTIONAL BIOSYNTHETIC PEPTIDOGLYCAN TRANSGLYCOSYLASE"/>
    <property type="match status" value="1"/>
</dbReference>
<dbReference type="Pfam" id="PF00912">
    <property type="entry name" value="Transgly"/>
    <property type="match status" value="1"/>
</dbReference>
<dbReference type="SUPFAM" id="SSF53955">
    <property type="entry name" value="Lysozyme-like"/>
    <property type="match status" value="1"/>
</dbReference>
<accession>Q13U46</accession>